<feature type="chain" id="PRO_0000442284" description="p-cumate 2,3-dioxygenase system, ferredoxin component">
    <location>
        <begin position="1"/>
        <end position="118"/>
    </location>
</feature>
<feature type="domain" description="Rieske" evidence="2">
    <location>
        <begin position="14"/>
        <end position="111"/>
    </location>
</feature>
<feature type="binding site" evidence="1 2">
    <location>
        <position position="54"/>
    </location>
    <ligand>
        <name>[2Fe-2S] cluster</name>
        <dbReference type="ChEBI" id="CHEBI:190135"/>
    </ligand>
</feature>
<feature type="binding site" evidence="1 2">
    <location>
        <position position="56"/>
    </location>
    <ligand>
        <name>[2Fe-2S] cluster</name>
        <dbReference type="ChEBI" id="CHEBI:190135"/>
    </ligand>
</feature>
<feature type="binding site" evidence="1 2">
    <location>
        <position position="74"/>
    </location>
    <ligand>
        <name>[2Fe-2S] cluster</name>
        <dbReference type="ChEBI" id="CHEBI:190135"/>
    </ligand>
</feature>
<feature type="binding site" evidence="1 2">
    <location>
        <position position="77"/>
    </location>
    <ligand>
        <name>[2Fe-2S] cluster</name>
        <dbReference type="ChEBI" id="CHEBI:190135"/>
    </ligand>
</feature>
<protein>
    <recommendedName>
        <fullName evidence="6">p-cumate 2,3-dioxygenase system, ferredoxin component</fullName>
    </recommendedName>
</protein>
<sequence length="118" mass="12736">MTNIIETVDLTDLVGLCATDDVAEGEILRVKLPSGHALAIYCVNGEFFATDDICSHGEASLSEDGSLDGYEVECSWHFGRFDIRTGHACAMPCEHPLRSWPVTVEGGQIFVDVGAHPV</sequence>
<gene>
    <name evidence="6" type="primary">cmtAd</name>
    <name evidence="12" type="ORF">CBP06_10585</name>
</gene>
<keyword id="KW-0001">2Fe-2S</keyword>
<keyword id="KW-0058">Aromatic hydrocarbons catabolism</keyword>
<keyword id="KW-0249">Electron transport</keyword>
<keyword id="KW-0408">Iron</keyword>
<keyword id="KW-0411">Iron-sulfur</keyword>
<keyword id="KW-0479">Metal-binding</keyword>
<keyword id="KW-0813">Transport</keyword>
<proteinExistence type="evidence at protein level"/>
<comment type="function">
    <text evidence="3 4 8">Component of the p-cumate 2,3-dioxygenase multicomponent enzyme system which catalyzes the incorporation of both atoms of molecular oxygen into p-cumate to form cis-2,3-dihydroxy-2,3-dihydro-p-cumate. Functions as an intermediate electron transfer protein via a specific interaction with iron sulfur protein components (ISP)(CmtAb and CmtAc).</text>
</comment>
<comment type="cofactor">
    <cofactor evidence="1 2">
        <name>[2Fe-2S] cluster</name>
        <dbReference type="ChEBI" id="CHEBI:190135"/>
    </cofactor>
    <text evidence="1 2">Binds 1 [2Fe-2S] cluster per subunit.</text>
</comment>
<comment type="pathway">
    <text evidence="8">Aromatic compound metabolism; p-cumate degradation; acetaldehyde and pyruvate from p-cumate.</text>
</comment>
<comment type="subunit">
    <text evidence="8">The p-cumate 2,3-dioxygenase multicomponent enzyme system is composed of an electron transfer component and a dioxygenase component (iron sulfur protein (ISP)). The electron transfer component is composed of a ferredoxin reductase (CmtAa) and a ferredoxin (CmtAd), and the dioxygenase component is formed of a large alpha subunit (CmtAb) and a small beta subunit (CmtAc).</text>
</comment>
<comment type="induction">
    <text evidence="5">Induced by p-cumate and repressed by CymR.</text>
</comment>
<comment type="similarity">
    <text evidence="7">Belongs to the bacterial ring-hydroxylating dioxygenase ferredoxin component family.</text>
</comment>
<organism>
    <name type="scientific">Pseudomonas putida</name>
    <name type="common">Arthrobacter siderocapsulatus</name>
    <dbReference type="NCBI Taxonomy" id="303"/>
    <lineage>
        <taxon>Bacteria</taxon>
        <taxon>Pseudomonadati</taxon>
        <taxon>Pseudomonadota</taxon>
        <taxon>Gammaproteobacteria</taxon>
        <taxon>Pseudomonadales</taxon>
        <taxon>Pseudomonadaceae</taxon>
        <taxon>Pseudomonas</taxon>
    </lineage>
</organism>
<reference key="1">
    <citation type="journal article" date="1996" name="J. Bacteriol.">
        <title>p-cumate catabolic pathway in Pseudomonas putida F1: cloning and characterization of DNA carrying the cmt operon.</title>
        <authorList>
            <person name="Eaton R.W."/>
        </authorList>
    </citation>
    <scope>NUCLEOTIDE SEQUENCE [GENOMIC DNA]</scope>
    <scope>FUNCTION</scope>
    <scope>PATHWAY</scope>
    <scope>SUBUNIT</scope>
    <source>
        <strain evidence="9">F1</strain>
    </source>
</reference>
<reference key="2">
    <citation type="journal article" date="1997" name="J. Bacteriol.">
        <title>p-Cymene catabolic pathway in Pseudomonas putida F1: cloning and characterization of DNA encoding conversion of p-cymene to p-cumate.</title>
        <authorList>
            <person name="Eaton R.W."/>
        </authorList>
    </citation>
    <scope>NUCLEOTIDE SEQUENCE [GENOMIC DNA]</scope>
    <scope>INDUCTION</scope>
    <source>
        <strain evidence="9">F1</strain>
    </source>
</reference>
<reference key="3">
    <citation type="journal article" date="1999" name="Gene">
        <title>Toluene metabolism by the solvent-tolerant Pseudomonas putida DOT-T1 strain, and its role in solvent impermeabilization.</title>
        <authorList>
            <person name="Mosqueda G."/>
            <person name="Ramos-Gonzalez M.I."/>
            <person name="Ramos J.L."/>
        </authorList>
    </citation>
    <scope>NUCLEOTIDE SEQUENCE [GENOMIC DNA]</scope>
    <source>
        <strain evidence="11">DOT-T1E</strain>
    </source>
</reference>
<reference key="4">
    <citation type="journal article" date="2000" name="J. Bacteriol.">
        <title>A set of genes encoding a second toluene efflux system in Pseudomonas putida DOT-T1 is linked to the tod genes for toluene metabolism.</title>
        <authorList>
            <person name="Mosqueda G."/>
            <person name="Ramos J.L."/>
        </authorList>
    </citation>
    <scope>NUCLEOTIDE SEQUENCE [GENOMIC DNA]</scope>
    <source>
        <strain evidence="11">DOT-T1E</strain>
    </source>
</reference>
<reference key="5">
    <citation type="journal article" date="2001" name="Microbiology">
        <title>Pseudomonas putida CE2010 can degrade biphenyl by a mosaic pathway encoded by the tod operon and cmtE, which are identical to those of P. putida F1 except for a single base difference in the operator-promoter region of the cmt operon.</title>
        <authorList>
            <person name="Ohta Y."/>
            <person name="Maeda M."/>
            <person name="Kudo T."/>
        </authorList>
    </citation>
    <scope>NUCLEOTIDE SEQUENCE [GENOMIC DNA]</scope>
</reference>
<reference key="6">
    <citation type="journal article" date="2001" name="Mol. Microbiol.">
        <title>Global and cognate regulators control the expression of the organic solvent efflux pumps TtgABC and TtgDEF of Pseudomonas putida.</title>
        <authorList>
            <person name="Duque E."/>
            <person name="Segura A."/>
            <person name="Mosqueda G."/>
            <person name="Ramos J.L."/>
        </authorList>
    </citation>
    <scope>NUCLEOTIDE SEQUENCE [GENOMIC DNA]</scope>
    <source>
        <strain evidence="11">DOT-T1E</strain>
    </source>
</reference>
<reference key="7">
    <citation type="journal article" date="2006" name="J. Microbiol.">
        <title>Identification and expression of the cym, cmt, and tod catabolic genes from Pseudomonas putida KL47: expression of the regulatory todST genes as a factor for catabolic adaptation.</title>
        <authorList>
            <person name="Lee K."/>
            <person name="Ryu E.K."/>
            <person name="Choi K.S."/>
            <person name="Cho M.C."/>
            <person name="Jeong J.J."/>
            <person name="Choi E.N."/>
            <person name="Lee S.O."/>
            <person name="Yoon D.Y."/>
            <person name="Hwang I."/>
            <person name="Kim C.K."/>
        </authorList>
    </citation>
    <scope>NUCLEOTIDE SEQUENCE [GENOMIC DNA]</scope>
    <source>
        <strain evidence="10">KL47</strain>
    </source>
</reference>
<reference key="8">
    <citation type="submission" date="2009-08" db="EMBL/GenBank/DDBJ databases">
        <title>Global regulation of food supply by Pseudomonas putida DOT-T1E.</title>
        <authorList>
            <person name="Daniels C."/>
            <person name="Godoy P."/>
            <person name="Duque E."/>
            <person name="Molina-Henares M.A."/>
            <person name="de la Torre J."/>
            <person name="Del Arco J.M."/>
            <person name="Herrera C."/>
            <person name="Segura A."/>
            <person name="Guazzaroni M.E."/>
            <person name="Ferrer M."/>
            <person name="Ramos J.L."/>
        </authorList>
    </citation>
    <scope>NUCLEOTIDE SEQUENCE [GENOMIC DNA]</scope>
    <source>
        <strain evidence="11">DOT-T1E</strain>
    </source>
</reference>
<reference key="9">
    <citation type="submission" date="2017-05" db="EMBL/GenBank/DDBJ databases">
        <title>Pseudomonas putida UV495 draft genome.</title>
        <authorList>
            <person name="Skvortsov T."/>
            <person name="Hoering P."/>
            <person name="Allen C.C.R."/>
        </authorList>
    </citation>
    <scope>NUCLEOTIDE SEQUENCE [LARGE SCALE GENOMIC DNA]</scope>
    <source>
        <strain evidence="12">UV4/95</strain>
    </source>
</reference>
<reference key="10">
    <citation type="journal article" date="1977" name="J. Bacteriol.">
        <title>p-cymene pathway in Pseudomonas putida: initial reactions.</title>
        <authorList>
            <person name="DeFrank J.J."/>
            <person name="Ribbons D.W."/>
        </authorList>
    </citation>
    <scope>FUNCTION</scope>
    <source>
        <strain>PL</strain>
    </source>
</reference>
<reference key="11">
    <citation type="journal article" date="1995" name="J. Bacteriol.">
        <title>Formation of indigo and related compounds from indolecarboxylic acids by aromatic acid-degrading bacteria: chromogenic reactions for cloning genes encoding dioxygenases that act on aromatic acids.</title>
        <authorList>
            <person name="Eaton R.W."/>
            <person name="Chapman P.J."/>
        </authorList>
    </citation>
    <scope>FUNCTION</scope>
</reference>
<name>CMTAD_PSEPU</name>
<dbReference type="EMBL" id="U24215">
    <property type="protein sequence ID" value="AAB62289.1"/>
    <property type="molecule type" value="Genomic_DNA"/>
</dbReference>
<dbReference type="EMBL" id="DQ157469">
    <property type="protein sequence ID" value="ABA10798.1"/>
    <property type="molecule type" value="Genomic_DNA"/>
</dbReference>
<dbReference type="EMBL" id="GQ884177">
    <property type="protein sequence ID" value="ADI95387.1"/>
    <property type="molecule type" value="Genomic_DNA"/>
</dbReference>
<dbReference type="EMBL" id="AB042508">
    <property type="protein sequence ID" value="BAB17775.1"/>
    <property type="molecule type" value="Genomic_DNA"/>
</dbReference>
<dbReference type="EMBL" id="NHBC01000013">
    <property type="protein sequence ID" value="OUS88308.1"/>
    <property type="molecule type" value="Genomic_DNA"/>
</dbReference>
<dbReference type="RefSeq" id="WP_012052613.1">
    <property type="nucleotide sequence ID" value="NZ_NHBC01000013.1"/>
</dbReference>
<dbReference type="SMR" id="Q51978"/>
<dbReference type="BioCyc" id="MetaCyc:MONOMER-347"/>
<dbReference type="BRENDA" id="1.14.12.25">
    <property type="organism ID" value="5092"/>
</dbReference>
<dbReference type="GO" id="GO:0051537">
    <property type="term" value="F:2 iron, 2 sulfur cluster binding"/>
    <property type="evidence" value="ECO:0007669"/>
    <property type="project" value="UniProtKB-KW"/>
</dbReference>
<dbReference type="GO" id="GO:0046872">
    <property type="term" value="F:metal ion binding"/>
    <property type="evidence" value="ECO:0007669"/>
    <property type="project" value="UniProtKB-KW"/>
</dbReference>
<dbReference type="GO" id="GO:0009056">
    <property type="term" value="P:catabolic process"/>
    <property type="evidence" value="ECO:0007669"/>
    <property type="project" value="UniProtKB-KW"/>
</dbReference>
<dbReference type="CDD" id="cd03528">
    <property type="entry name" value="Rieske_RO_ferredoxin"/>
    <property type="match status" value="1"/>
</dbReference>
<dbReference type="Gene3D" id="2.102.10.10">
    <property type="entry name" value="Rieske [2Fe-2S] iron-sulphur domain"/>
    <property type="match status" value="1"/>
</dbReference>
<dbReference type="InterPro" id="IPR017941">
    <property type="entry name" value="Rieske_2Fe-2S"/>
</dbReference>
<dbReference type="InterPro" id="IPR036922">
    <property type="entry name" value="Rieske_2Fe-2S_sf"/>
</dbReference>
<dbReference type="PANTHER" id="PTHR21496:SF23">
    <property type="entry name" value="3-PHENYLPROPIONATE_CINNAMIC ACID DIOXYGENASE FERREDOXIN SUBUNIT"/>
    <property type="match status" value="1"/>
</dbReference>
<dbReference type="PANTHER" id="PTHR21496">
    <property type="entry name" value="FERREDOXIN-RELATED"/>
    <property type="match status" value="1"/>
</dbReference>
<dbReference type="Pfam" id="PF00355">
    <property type="entry name" value="Rieske"/>
    <property type="match status" value="1"/>
</dbReference>
<dbReference type="SUPFAM" id="SSF50022">
    <property type="entry name" value="ISP domain"/>
    <property type="match status" value="1"/>
</dbReference>
<dbReference type="PROSITE" id="PS51296">
    <property type="entry name" value="RIESKE"/>
    <property type="match status" value="1"/>
</dbReference>
<accession>Q51978</accession>
<evidence type="ECO:0000250" key="1">
    <source>
        <dbReference type="UniProtKB" id="P0A185"/>
    </source>
</evidence>
<evidence type="ECO:0000255" key="2">
    <source>
        <dbReference type="PROSITE-ProRule" id="PRU00628"/>
    </source>
</evidence>
<evidence type="ECO:0000269" key="3">
    <source>
    </source>
</evidence>
<evidence type="ECO:0000269" key="4">
    <source>
    </source>
</evidence>
<evidence type="ECO:0000269" key="5">
    <source>
    </source>
</evidence>
<evidence type="ECO:0000303" key="6">
    <source>
    </source>
</evidence>
<evidence type="ECO:0000305" key="7"/>
<evidence type="ECO:0000305" key="8">
    <source>
    </source>
</evidence>
<evidence type="ECO:0000312" key="9">
    <source>
        <dbReference type="EMBL" id="AAB62289.1"/>
    </source>
</evidence>
<evidence type="ECO:0000312" key="10">
    <source>
        <dbReference type="EMBL" id="ABA10798.1"/>
    </source>
</evidence>
<evidence type="ECO:0000312" key="11">
    <source>
        <dbReference type="EMBL" id="ADI95387.1"/>
    </source>
</evidence>
<evidence type="ECO:0000312" key="12">
    <source>
        <dbReference type="EMBL" id="OUS88308.1"/>
    </source>
</evidence>